<sequence>MQILRIAQLMALLATCASALPTSTGSRVYSRDVDQTQGGFSGSPTTNSPDSVAETGRLEARSGGSSSTETEKERKKRIKAEQNARIRQEEINRKPYQCPYCSDPTVFSHSDALGRHIYTIHRGMPIYNAKDPRKTAIPYNPPGRSTSIFGSEPF</sequence>
<keyword id="KW-1048">Host nucleus</keyword>
<keyword id="KW-0479">Metal-binding</keyword>
<keyword id="KW-1185">Reference proteome</keyword>
<keyword id="KW-0964">Secreted</keyword>
<keyword id="KW-0732">Signal</keyword>
<keyword id="KW-0804">Transcription</keyword>
<keyword id="KW-0805">Transcription regulation</keyword>
<keyword id="KW-0843">Virulence</keyword>
<keyword id="KW-0862">Zinc</keyword>
<keyword id="KW-0863">Zinc-finger</keyword>
<organism>
    <name type="scientific">Pyricularia oryzae (strain 70-15 / ATCC MYA-4617 / FGSC 8958)</name>
    <name type="common">Rice blast fungus</name>
    <name type="synonym">Magnaporthe oryzae</name>
    <dbReference type="NCBI Taxonomy" id="242507"/>
    <lineage>
        <taxon>Eukaryota</taxon>
        <taxon>Fungi</taxon>
        <taxon>Dikarya</taxon>
        <taxon>Ascomycota</taxon>
        <taxon>Pezizomycotina</taxon>
        <taxon>Sordariomycetes</taxon>
        <taxon>Sordariomycetidae</taxon>
        <taxon>Magnaporthales</taxon>
        <taxon>Pyriculariaceae</taxon>
        <taxon>Pyricularia</taxon>
    </lineage>
</organism>
<dbReference type="EMBL" id="CM001235">
    <property type="protein sequence ID" value="EHA48460.1"/>
    <property type="molecule type" value="Genomic_DNA"/>
</dbReference>
<dbReference type="RefSeq" id="XP_003718044.1">
    <property type="nucleotide sequence ID" value="XM_003717996.1"/>
</dbReference>
<dbReference type="EnsemblFungi" id="MGG_00916T0">
    <property type="protein sequence ID" value="MGG_00916T0"/>
    <property type="gene ID" value="MGG_00916"/>
</dbReference>
<dbReference type="GeneID" id="2674703"/>
<dbReference type="KEGG" id="mgr:MGG_00916"/>
<dbReference type="VEuPathDB" id="FungiDB:MGG_00916"/>
<dbReference type="HOGENOM" id="CLU_1704584_0_0_1"/>
<dbReference type="InParanoid" id="G4NDH1"/>
<dbReference type="OrthoDB" id="10456147at2759"/>
<dbReference type="Proteomes" id="UP000009058">
    <property type="component" value="Chromosome 5"/>
</dbReference>
<dbReference type="GO" id="GO:0005576">
    <property type="term" value="C:extracellular region"/>
    <property type="evidence" value="ECO:0007669"/>
    <property type="project" value="UniProtKB-SubCell"/>
</dbReference>
<dbReference type="GO" id="GO:0042025">
    <property type="term" value="C:host cell nucleus"/>
    <property type="evidence" value="ECO:0007669"/>
    <property type="project" value="UniProtKB-SubCell"/>
</dbReference>
<dbReference type="GO" id="GO:0008270">
    <property type="term" value="F:zinc ion binding"/>
    <property type="evidence" value="ECO:0007669"/>
    <property type="project" value="UniProtKB-KW"/>
</dbReference>
<dbReference type="Gene3D" id="3.30.160.60">
    <property type="entry name" value="Classic Zinc Finger"/>
    <property type="match status" value="1"/>
</dbReference>
<comment type="function">
    <text evidence="6">Probable secreted effector that translocates into the nuclei of host cells to reprogram the expression of targeted genes by binding on effector binding elements in rice.</text>
</comment>
<comment type="subcellular location">
    <subcellularLocation>
        <location evidence="1">Secreted</location>
    </subcellularLocation>
    <subcellularLocation>
        <location evidence="6">Host nucleus</location>
    </subcellularLocation>
</comment>
<comment type="induction">
    <text evidence="4">Expressed during multiple stages of host plant infection, including the prepenetration, early biotrophy, late biotrophy, transition and necrotrophy.</text>
</comment>
<gene>
    <name evidence="5" type="primary">HTR5</name>
    <name type="ORF">MGG_00916</name>
</gene>
<protein>
    <recommendedName>
        <fullName evidence="5">Host transcription reprogramming factor 5</fullName>
    </recommendedName>
    <alternativeName>
        <fullName evidence="5">Secreted nuclear effector HTR5</fullName>
    </alternativeName>
</protein>
<proteinExistence type="evidence at transcript level"/>
<evidence type="ECO:0000255" key="1"/>
<evidence type="ECO:0000255" key="2">
    <source>
        <dbReference type="PROSITE-ProRule" id="PRU00042"/>
    </source>
</evidence>
<evidence type="ECO:0000256" key="3">
    <source>
        <dbReference type="SAM" id="MobiDB-lite"/>
    </source>
</evidence>
<evidence type="ECO:0000269" key="4">
    <source>
    </source>
</evidence>
<evidence type="ECO:0000303" key="5">
    <source>
    </source>
</evidence>
<evidence type="ECO:0000305" key="6">
    <source>
    </source>
</evidence>
<name>HTR5_PYRO7</name>
<feature type="signal peptide" evidence="1">
    <location>
        <begin position="1"/>
        <end position="19"/>
    </location>
</feature>
<feature type="chain" id="PRO_5003466397" description="Host transcription reprogramming factor 5">
    <location>
        <begin position="20"/>
        <end position="154"/>
    </location>
</feature>
<feature type="zinc finger region" description="C2H2-type; degenerate" evidence="2">
    <location>
        <begin position="96"/>
        <end position="121"/>
    </location>
</feature>
<feature type="region of interest" description="Disordered" evidence="3">
    <location>
        <begin position="24"/>
        <end position="85"/>
    </location>
</feature>
<feature type="compositionally biased region" description="Polar residues" evidence="3">
    <location>
        <begin position="35"/>
        <end position="50"/>
    </location>
</feature>
<feature type="compositionally biased region" description="Basic and acidic residues" evidence="3">
    <location>
        <begin position="69"/>
        <end position="85"/>
    </location>
</feature>
<reference key="1">
    <citation type="journal article" date="2005" name="Nature">
        <title>The genome sequence of the rice blast fungus Magnaporthe grisea.</title>
        <authorList>
            <person name="Dean R.A."/>
            <person name="Talbot N.J."/>
            <person name="Ebbole D.J."/>
            <person name="Farman M.L."/>
            <person name="Mitchell T.K."/>
            <person name="Orbach M.J."/>
            <person name="Thon M.R."/>
            <person name="Kulkarni R."/>
            <person name="Xu J.-R."/>
            <person name="Pan H."/>
            <person name="Read N.D."/>
            <person name="Lee Y.-H."/>
            <person name="Carbone I."/>
            <person name="Brown D."/>
            <person name="Oh Y.Y."/>
            <person name="Donofrio N."/>
            <person name="Jeong J.S."/>
            <person name="Soanes D.M."/>
            <person name="Djonovic S."/>
            <person name="Kolomiets E."/>
            <person name="Rehmeyer C."/>
            <person name="Li W."/>
            <person name="Harding M."/>
            <person name="Kim S."/>
            <person name="Lebrun M.-H."/>
            <person name="Bohnert H."/>
            <person name="Coughlan S."/>
            <person name="Butler J."/>
            <person name="Calvo S.E."/>
            <person name="Ma L.-J."/>
            <person name="Nicol R."/>
            <person name="Purcell S."/>
            <person name="Nusbaum C."/>
            <person name="Galagan J.E."/>
            <person name="Birren B.W."/>
        </authorList>
    </citation>
    <scope>NUCLEOTIDE SEQUENCE [LARGE SCALE GENOMIC DNA]</scope>
    <source>
        <strain>70-15 / ATCC MYA-4617 / FGSC 8958</strain>
    </source>
</reference>
<reference key="2">
    <citation type="journal article" date="2020" name="Nat. Commun.">
        <title>Two nuclear effectors of the rice blast fungus modulate host immunity via transcriptional reprogramming.</title>
        <authorList>
            <person name="Kim S."/>
            <person name="Kim C.Y."/>
            <person name="Park S.Y."/>
            <person name="Kim K.T."/>
            <person name="Jeon J."/>
            <person name="Chung H."/>
            <person name="Choi G."/>
            <person name="Kwon S."/>
            <person name="Choi J."/>
            <person name="Jeon J."/>
            <person name="Jeon J.S."/>
            <person name="Khang C.H."/>
            <person name="Kang S."/>
            <person name="Lee Y.H."/>
        </authorList>
    </citation>
    <scope>FUNCTION</scope>
    <scope>INDUCTION</scope>
</reference>
<accession>G4NDH1</accession>